<evidence type="ECO:0000255" key="1">
    <source>
        <dbReference type="HAMAP-Rule" id="MF_00375"/>
    </source>
</evidence>
<reference key="1">
    <citation type="journal article" date="2003" name="Nature">
        <title>Unique physiological and pathogenic features of Leptospira interrogans revealed by whole-genome sequencing.</title>
        <authorList>
            <person name="Ren S.-X."/>
            <person name="Fu G."/>
            <person name="Jiang X.-G."/>
            <person name="Zeng R."/>
            <person name="Miao Y.-G."/>
            <person name="Xu H."/>
            <person name="Zhang Y.-X."/>
            <person name="Xiong H."/>
            <person name="Lu G."/>
            <person name="Lu L.-F."/>
            <person name="Jiang H.-Q."/>
            <person name="Jia J."/>
            <person name="Tu Y.-F."/>
            <person name="Jiang J.-X."/>
            <person name="Gu W.-Y."/>
            <person name="Zhang Y.-Q."/>
            <person name="Cai Z."/>
            <person name="Sheng H.-H."/>
            <person name="Yin H.-F."/>
            <person name="Zhang Y."/>
            <person name="Zhu G.-F."/>
            <person name="Wan M."/>
            <person name="Huang H.-L."/>
            <person name="Qian Z."/>
            <person name="Wang S.-Y."/>
            <person name="Ma W."/>
            <person name="Yao Z.-J."/>
            <person name="Shen Y."/>
            <person name="Qiang B.-Q."/>
            <person name="Xia Q.-C."/>
            <person name="Guo X.-K."/>
            <person name="Danchin A."/>
            <person name="Saint Girons I."/>
            <person name="Somerville R.L."/>
            <person name="Wen Y.-M."/>
            <person name="Shi M.-H."/>
            <person name="Chen Z."/>
            <person name="Xu J.-G."/>
            <person name="Zhao G.-P."/>
        </authorList>
    </citation>
    <scope>NUCLEOTIDE SEQUENCE [LARGE SCALE GENOMIC DNA]</scope>
    <source>
        <strain>56601</strain>
    </source>
</reference>
<accession>Q8EY44</accession>
<feature type="chain" id="PRO_0000382330" description="Glutamate-1-semialdehyde 2,1-aminomutase">
    <location>
        <begin position="1"/>
        <end position="443"/>
    </location>
</feature>
<feature type="modified residue" description="N6-(pyridoxal phosphate)lysine" evidence="1">
    <location>
        <position position="281"/>
    </location>
</feature>
<organism>
    <name type="scientific">Leptospira interrogans serogroup Icterohaemorrhagiae serovar Lai (strain 56601)</name>
    <dbReference type="NCBI Taxonomy" id="189518"/>
    <lineage>
        <taxon>Bacteria</taxon>
        <taxon>Pseudomonadati</taxon>
        <taxon>Spirochaetota</taxon>
        <taxon>Spirochaetia</taxon>
        <taxon>Leptospirales</taxon>
        <taxon>Leptospiraceae</taxon>
        <taxon>Leptospira</taxon>
    </lineage>
</organism>
<dbReference type="EC" id="5.4.3.8" evidence="1"/>
<dbReference type="EMBL" id="AE010301">
    <property type="protein sequence ID" value="AAN51572.1"/>
    <property type="molecule type" value="Genomic_DNA"/>
</dbReference>
<dbReference type="RefSeq" id="NP_714557.1">
    <property type="nucleotide sequence ID" value="NC_004343.2"/>
</dbReference>
<dbReference type="RefSeq" id="WP_001075137.1">
    <property type="nucleotide sequence ID" value="NC_004343.2"/>
</dbReference>
<dbReference type="SMR" id="Q8EY44"/>
<dbReference type="FunCoup" id="Q8EY44">
    <property type="interactions" value="503"/>
</dbReference>
<dbReference type="STRING" id="189518.LB_013"/>
<dbReference type="PaxDb" id="189518-LB_013"/>
<dbReference type="EnsemblBacteria" id="AAN51572">
    <property type="protein sequence ID" value="AAN51572"/>
    <property type="gene ID" value="LB_013"/>
</dbReference>
<dbReference type="KEGG" id="lil:LB_013"/>
<dbReference type="PATRIC" id="fig|189518.3.peg.4338"/>
<dbReference type="HOGENOM" id="CLU_016922_1_5_12"/>
<dbReference type="InParanoid" id="Q8EY44"/>
<dbReference type="OrthoDB" id="9807885at2"/>
<dbReference type="UniPathway" id="UPA00251">
    <property type="reaction ID" value="UER00317"/>
</dbReference>
<dbReference type="Proteomes" id="UP000001408">
    <property type="component" value="Chromosome II"/>
</dbReference>
<dbReference type="GO" id="GO:0005737">
    <property type="term" value="C:cytoplasm"/>
    <property type="evidence" value="ECO:0007669"/>
    <property type="project" value="UniProtKB-SubCell"/>
</dbReference>
<dbReference type="GO" id="GO:0042286">
    <property type="term" value="F:glutamate-1-semialdehyde 2,1-aminomutase activity"/>
    <property type="evidence" value="ECO:0007669"/>
    <property type="project" value="UniProtKB-UniRule"/>
</dbReference>
<dbReference type="GO" id="GO:0030170">
    <property type="term" value="F:pyridoxal phosphate binding"/>
    <property type="evidence" value="ECO:0007669"/>
    <property type="project" value="InterPro"/>
</dbReference>
<dbReference type="GO" id="GO:0008483">
    <property type="term" value="F:transaminase activity"/>
    <property type="evidence" value="ECO:0007669"/>
    <property type="project" value="InterPro"/>
</dbReference>
<dbReference type="GO" id="GO:0006782">
    <property type="term" value="P:protoporphyrinogen IX biosynthetic process"/>
    <property type="evidence" value="ECO:0007669"/>
    <property type="project" value="UniProtKB-UniRule"/>
</dbReference>
<dbReference type="CDD" id="cd00610">
    <property type="entry name" value="OAT_like"/>
    <property type="match status" value="1"/>
</dbReference>
<dbReference type="FunFam" id="3.40.640.10:FF:000021">
    <property type="entry name" value="Glutamate-1-semialdehyde 2,1-aminomutase"/>
    <property type="match status" value="1"/>
</dbReference>
<dbReference type="Gene3D" id="3.90.1150.10">
    <property type="entry name" value="Aspartate Aminotransferase, domain 1"/>
    <property type="match status" value="1"/>
</dbReference>
<dbReference type="Gene3D" id="3.40.640.10">
    <property type="entry name" value="Type I PLP-dependent aspartate aminotransferase-like (Major domain)"/>
    <property type="match status" value="1"/>
</dbReference>
<dbReference type="HAMAP" id="MF_00375">
    <property type="entry name" value="HemL_aminotrans_3"/>
    <property type="match status" value="1"/>
</dbReference>
<dbReference type="InterPro" id="IPR004639">
    <property type="entry name" value="4pyrrol_synth_GluAld_NH2Trfase"/>
</dbReference>
<dbReference type="InterPro" id="IPR005814">
    <property type="entry name" value="Aminotrans_3"/>
</dbReference>
<dbReference type="InterPro" id="IPR049704">
    <property type="entry name" value="Aminotrans_3_PPA_site"/>
</dbReference>
<dbReference type="InterPro" id="IPR015424">
    <property type="entry name" value="PyrdxlP-dep_Trfase"/>
</dbReference>
<dbReference type="InterPro" id="IPR015421">
    <property type="entry name" value="PyrdxlP-dep_Trfase_major"/>
</dbReference>
<dbReference type="InterPro" id="IPR015422">
    <property type="entry name" value="PyrdxlP-dep_Trfase_small"/>
</dbReference>
<dbReference type="NCBIfam" id="NF000818">
    <property type="entry name" value="PRK00062.1"/>
    <property type="match status" value="1"/>
</dbReference>
<dbReference type="PANTHER" id="PTHR43713">
    <property type="entry name" value="GLUTAMATE-1-SEMIALDEHYDE 2,1-AMINOMUTASE"/>
    <property type="match status" value="1"/>
</dbReference>
<dbReference type="PANTHER" id="PTHR43713:SF3">
    <property type="entry name" value="GLUTAMATE-1-SEMIALDEHYDE 2,1-AMINOMUTASE 1, CHLOROPLASTIC-RELATED"/>
    <property type="match status" value="1"/>
</dbReference>
<dbReference type="Pfam" id="PF00202">
    <property type="entry name" value="Aminotran_3"/>
    <property type="match status" value="1"/>
</dbReference>
<dbReference type="SUPFAM" id="SSF53383">
    <property type="entry name" value="PLP-dependent transferases"/>
    <property type="match status" value="1"/>
</dbReference>
<dbReference type="PROSITE" id="PS00600">
    <property type="entry name" value="AA_TRANSFER_CLASS_3"/>
    <property type="match status" value="1"/>
</dbReference>
<gene>
    <name evidence="1" type="primary">hemL</name>
    <name type="ordered locus">LB_013</name>
</gene>
<name>GSA_LEPIN</name>
<proteinExistence type="inferred from homology"/>
<comment type="catalytic activity">
    <reaction evidence="1">
        <text>(S)-4-amino-5-oxopentanoate = 5-aminolevulinate</text>
        <dbReference type="Rhea" id="RHEA:14265"/>
        <dbReference type="ChEBI" id="CHEBI:57501"/>
        <dbReference type="ChEBI" id="CHEBI:356416"/>
        <dbReference type="EC" id="5.4.3.8"/>
    </reaction>
</comment>
<comment type="cofactor">
    <cofactor evidence="1">
        <name>pyridoxal 5'-phosphate</name>
        <dbReference type="ChEBI" id="CHEBI:597326"/>
    </cofactor>
</comment>
<comment type="pathway">
    <text evidence="1">Porphyrin-containing compound metabolism; protoporphyrin-IX biosynthesis; 5-aminolevulinate from L-glutamyl-tRNA(Glu): step 2/2.</text>
</comment>
<comment type="subunit">
    <text evidence="1">Homodimer.</text>
</comment>
<comment type="subcellular location">
    <subcellularLocation>
        <location evidence="1">Cytoplasm</location>
    </subcellularLocation>
</comment>
<comment type="similarity">
    <text evidence="1">Belongs to the class-III pyridoxal-phosphate-dependent aminotransferase family. HemL subfamily.</text>
</comment>
<protein>
    <recommendedName>
        <fullName evidence="1">Glutamate-1-semialdehyde 2,1-aminomutase</fullName>
        <shortName evidence="1">GSA</shortName>
        <ecNumber evidence="1">5.4.3.8</ecNumber>
    </recommendedName>
    <alternativeName>
        <fullName evidence="1">Glutamate-1-semialdehyde aminotransferase</fullName>
        <shortName evidence="1">GSA-AT</shortName>
    </alternativeName>
</protein>
<keyword id="KW-0963">Cytoplasm</keyword>
<keyword id="KW-0413">Isomerase</keyword>
<keyword id="KW-0627">Porphyrin biosynthesis</keyword>
<keyword id="KW-0663">Pyridoxal phosphate</keyword>
<keyword id="KW-1185">Reference proteome</keyword>
<sequence length="443" mass="48541">MNQNKPTSKLISDFWKGKTSEELFERAKKVSPGGVHSPVRSFRSVGGTPVFFASAKGATLTDISGKEYIDYCLSFGPLILGHRDPEVEEVVRETTEIAWSFGAAEPYSLELAELISSRVPWAEKVRFVNSGTEAVMSALRVARAATGREKILKFDGCYHGHLDSLLVKAGSGLAGESSSDSAGISATSIANTLVLPLDDEASVERVFETEGKNIAALIIEPLPANYGLLIQRKEFLLKIVETARKYGTLVVFDEVISGFRVGFQGMSGLLGIWPDLVTYGKIIGGGFPVGCYAGKKDLLDLVAPSGPVYQAGTLSANPFGMRAGLATLKKVQRDSIYSVLDDRTKIFTDTMTKLLNKKSNQEWEAVIHSSLFWFRKKTQQPIRRIDLIPEGHKESFAKVFHTFLKNGIYLAPSGYEVGFLSWAHDDEIIAKTLEIADKALKTF</sequence>